<comment type="function">
    <text evidence="1 2">Synthase catalytic subunit of the trehalose synthase complex that catalyzes the production of trehalose from glucose-6-phosphate and UDP-alpha-D-glucose in a two step process.</text>
</comment>
<comment type="catalytic activity">
    <reaction evidence="1 5">
        <text>D-glucose 6-phosphate + UDP-alpha-D-glucose = alpha,alpha-trehalose 6-phosphate + UDP + H(+)</text>
        <dbReference type="Rhea" id="RHEA:18889"/>
        <dbReference type="ChEBI" id="CHEBI:15378"/>
        <dbReference type="ChEBI" id="CHEBI:58223"/>
        <dbReference type="ChEBI" id="CHEBI:58429"/>
        <dbReference type="ChEBI" id="CHEBI:58885"/>
        <dbReference type="ChEBI" id="CHEBI:61548"/>
        <dbReference type="EC" id="2.4.1.15"/>
    </reaction>
</comment>
<comment type="activity regulation">
    <text evidence="1">Inhibited by validoxylamine A, a non-reactive trehalose analog.</text>
</comment>
<comment type="pathway">
    <text evidence="4">Carbohydrate biosynthesis.</text>
</comment>
<comment type="induction">
    <text>By heat shock.</text>
</comment>
<comment type="disruption phenotype">
    <text evidence="1">Abolishes hyphal formation and impairs biofilm formation (PubMed:28743811). Sensitive to thermal stress (PubMed:28743811).</text>
</comment>
<comment type="similarity">
    <text evidence="4">Belongs to the glycosyltransferase 20 family.</text>
</comment>
<feature type="chain" id="PRO_0000122496" description="Alpha,alpha-trehalose-phosphate synthase [UDP-forming]">
    <location>
        <begin position="1"/>
        <end position="478"/>
    </location>
</feature>
<feature type="binding site" evidence="1 7">
    <location>
        <position position="89"/>
    </location>
    <ligand>
        <name>D-glucose 6-phosphate</name>
        <dbReference type="ChEBI" id="CHEBI:61548"/>
    </ligand>
</feature>
<feature type="binding site" evidence="1 7">
    <location>
        <position position="143"/>
    </location>
    <ligand>
        <name>D-glucose 6-phosphate</name>
        <dbReference type="ChEBI" id="CHEBI:61548"/>
    </ligand>
</feature>
<feature type="binding site" evidence="1 7">
    <location>
        <position position="280"/>
    </location>
    <ligand>
        <name>UDP</name>
        <dbReference type="ChEBI" id="CHEBI:58223"/>
    </ligand>
</feature>
<feature type="binding site" evidence="1 6">
    <location>
        <position position="280"/>
    </location>
    <ligand>
        <name>UDP-alpha-D-glucose</name>
        <dbReference type="ChEBI" id="CHEBI:58885"/>
    </ligand>
</feature>
<feature type="binding site" evidence="1 7">
    <location>
        <position position="285"/>
    </location>
    <ligand>
        <name>UDP</name>
        <dbReference type="ChEBI" id="CHEBI:58223"/>
    </ligand>
</feature>
<feature type="binding site" evidence="1 6">
    <location>
        <position position="285"/>
    </location>
    <ligand>
        <name>UDP-alpha-D-glucose</name>
        <dbReference type="ChEBI" id="CHEBI:58885"/>
    </ligand>
</feature>
<feature type="binding site" evidence="1 7">
    <location>
        <position position="318"/>
    </location>
    <ligand>
        <name>D-glucose 6-phosphate</name>
        <dbReference type="ChEBI" id="CHEBI:61548"/>
    </ligand>
</feature>
<feature type="binding site" evidence="1 7">
    <location>
        <position position="357"/>
    </location>
    <ligand>
        <name>UDP</name>
        <dbReference type="ChEBI" id="CHEBI:58223"/>
    </ligand>
</feature>
<feature type="binding site" evidence="1 6">
    <location>
        <position position="357"/>
    </location>
    <ligand>
        <name>UDP-alpha-D-glucose</name>
        <dbReference type="ChEBI" id="CHEBI:58885"/>
    </ligand>
</feature>
<feature type="binding site" evidence="1 6">
    <location>
        <begin position="379"/>
        <end position="387"/>
    </location>
    <ligand>
        <name>UDP-alpha-D-glucose</name>
        <dbReference type="ChEBI" id="CHEBI:58885"/>
    </ligand>
</feature>
<feature type="binding site" evidence="1 7">
    <location>
        <begin position="383"/>
        <end position="387"/>
    </location>
    <ligand>
        <name>UDP</name>
        <dbReference type="ChEBI" id="CHEBI:58223"/>
    </ligand>
</feature>
<feature type="mutagenesis site" description="Abolishes catalytic activity. Mildly impairs biofilm and hyphal formation. Sensitive to thermal stress." evidence="1">
    <original>Y</original>
    <variation>F</variation>
    <location>
        <position position="89"/>
    </location>
</feature>
<feature type="mutagenesis site" description="Abolishes catalytic activity. Impairs biofilm and hyphal formation. Sensitive to thermal stress." evidence="1">
    <original>K</original>
    <variation>A</variation>
    <location>
        <position position="285"/>
    </location>
</feature>
<feature type="mutagenesis site" description="Abolishes catalytic activity. Impairs biofilm and hyphal formation. Sensitive to thermal stress." evidence="1">
    <original>D</original>
    <variation>A</variation>
    <location>
        <position position="379"/>
    </location>
</feature>
<feature type="mutagenesis site" description="Abolishes catalytic activity. Impairs biofilm and hyphal formation. Sensitive to thermal stress." evidence="1">
    <original>E</original>
    <variation>A</variation>
    <location>
        <position position="387"/>
    </location>
</feature>
<feature type="strand" evidence="12">
    <location>
        <begin position="6"/>
        <end position="12"/>
    </location>
</feature>
<feature type="strand" evidence="12">
    <location>
        <begin position="14"/>
        <end position="19"/>
    </location>
</feature>
<feature type="strand" evidence="11">
    <location>
        <begin position="21"/>
        <end position="23"/>
    </location>
</feature>
<feature type="strand" evidence="12">
    <location>
        <begin position="25"/>
        <end position="29"/>
    </location>
</feature>
<feature type="helix" evidence="12">
    <location>
        <begin position="33"/>
        <end position="37"/>
    </location>
</feature>
<feature type="helix" evidence="12">
    <location>
        <begin position="39"/>
        <end position="42"/>
    </location>
</feature>
<feature type="strand" evidence="10">
    <location>
        <begin position="43"/>
        <end position="45"/>
    </location>
</feature>
<feature type="strand" evidence="12">
    <location>
        <begin position="47"/>
        <end position="52"/>
    </location>
</feature>
<feature type="helix" evidence="12">
    <location>
        <begin position="59"/>
        <end position="61"/>
    </location>
</feature>
<feature type="helix" evidence="12">
    <location>
        <begin position="62"/>
        <end position="73"/>
    </location>
</feature>
<feature type="strand" evidence="12">
    <location>
        <begin position="74"/>
        <end position="77"/>
    </location>
</feature>
<feature type="helix" evidence="12">
    <location>
        <begin position="82"/>
        <end position="89"/>
    </location>
</feature>
<feature type="helix" evidence="12">
    <location>
        <begin position="90"/>
        <end position="96"/>
    </location>
</feature>
<feature type="helix" evidence="12">
    <location>
        <begin position="97"/>
        <end position="101"/>
    </location>
</feature>
<feature type="helix" evidence="12">
    <location>
        <begin position="105"/>
        <end position="107"/>
    </location>
</feature>
<feature type="helix" evidence="12">
    <location>
        <begin position="112"/>
        <end position="130"/>
    </location>
</feature>
<feature type="strand" evidence="12">
    <location>
        <begin position="138"/>
        <end position="143"/>
    </location>
</feature>
<feature type="helix" evidence="12">
    <location>
        <begin position="144"/>
        <end position="146"/>
    </location>
</feature>
<feature type="helix" evidence="12">
    <location>
        <begin position="149"/>
        <end position="157"/>
    </location>
</feature>
<feature type="strand" evidence="12">
    <location>
        <begin position="160"/>
        <end position="163"/>
    </location>
</feature>
<feature type="strand" evidence="12">
    <location>
        <begin position="165"/>
        <end position="169"/>
    </location>
</feature>
<feature type="helix" evidence="12">
    <location>
        <begin position="177"/>
        <end position="180"/>
    </location>
</feature>
<feature type="helix" evidence="12">
    <location>
        <begin position="186"/>
        <end position="193"/>
    </location>
</feature>
<feature type="strand" evidence="12">
    <location>
        <begin position="197"/>
        <end position="203"/>
    </location>
</feature>
<feature type="helix" evidence="12">
    <location>
        <begin position="204"/>
        <end position="217"/>
    </location>
</feature>
<feature type="strand" evidence="12">
    <location>
        <begin position="221"/>
        <end position="224"/>
    </location>
</feature>
<feature type="strand" evidence="12">
    <location>
        <begin position="227"/>
        <end position="230"/>
    </location>
</feature>
<feature type="strand" evidence="12">
    <location>
        <begin position="233"/>
        <end position="239"/>
    </location>
</feature>
<feature type="helix" evidence="12">
    <location>
        <begin position="246"/>
        <end position="252"/>
    </location>
</feature>
<feature type="helix" evidence="12">
    <location>
        <begin position="256"/>
        <end position="268"/>
    </location>
</feature>
<feature type="turn" evidence="12">
    <location>
        <begin position="269"/>
        <end position="271"/>
    </location>
</feature>
<feature type="strand" evidence="12">
    <location>
        <begin position="272"/>
        <end position="281"/>
    </location>
</feature>
<feature type="helix" evidence="12">
    <location>
        <begin position="283"/>
        <end position="285"/>
    </location>
</feature>
<feature type="helix" evidence="12">
    <location>
        <begin position="287"/>
        <end position="300"/>
    </location>
</feature>
<feature type="helix" evidence="12">
    <location>
        <begin position="302"/>
        <end position="304"/>
    </location>
</feature>
<feature type="turn" evidence="12">
    <location>
        <begin position="305"/>
        <end position="307"/>
    </location>
</feature>
<feature type="strand" evidence="12">
    <location>
        <begin position="308"/>
        <end position="315"/>
    </location>
</feature>
<feature type="helix" evidence="12">
    <location>
        <begin position="322"/>
        <end position="342"/>
    </location>
</feature>
<feature type="strand" evidence="12">
    <location>
        <begin position="349"/>
        <end position="353"/>
    </location>
</feature>
<feature type="helix" evidence="12">
    <location>
        <begin position="359"/>
        <end position="368"/>
    </location>
</feature>
<feature type="strand" evidence="12">
    <location>
        <begin position="370"/>
        <end position="374"/>
    </location>
</feature>
<feature type="strand" evidence="12">
    <location>
        <begin position="377"/>
        <end position="381"/>
    </location>
</feature>
<feature type="helix" evidence="12">
    <location>
        <begin position="384"/>
        <end position="390"/>
    </location>
</feature>
<feature type="turn" evidence="12">
    <location>
        <begin position="393"/>
        <end position="395"/>
    </location>
</feature>
<feature type="strand" evidence="12">
    <location>
        <begin position="398"/>
        <end position="402"/>
    </location>
</feature>
<feature type="helix" evidence="12">
    <location>
        <begin position="406"/>
        <end position="409"/>
    </location>
</feature>
<feature type="strand" evidence="12">
    <location>
        <begin position="414"/>
        <end position="417"/>
    </location>
</feature>
<feature type="helix" evidence="12">
    <location>
        <begin position="422"/>
        <end position="434"/>
    </location>
</feature>
<feature type="helix" evidence="12">
    <location>
        <begin position="437"/>
        <end position="453"/>
    </location>
</feature>
<feature type="helix" evidence="12">
    <location>
        <begin position="456"/>
        <end position="469"/>
    </location>
</feature>
<proteinExistence type="evidence at protein level"/>
<evidence type="ECO:0000269" key="1">
    <source>
    </source>
</evidence>
<evidence type="ECO:0000269" key="2">
    <source>
    </source>
</evidence>
<evidence type="ECO:0000303" key="3">
    <source>
    </source>
</evidence>
<evidence type="ECO:0000305" key="4"/>
<evidence type="ECO:0000305" key="5">
    <source>
    </source>
</evidence>
<evidence type="ECO:0007744" key="6">
    <source>
        <dbReference type="PDB" id="5HUT"/>
    </source>
</evidence>
<evidence type="ECO:0007744" key="7">
    <source>
        <dbReference type="PDB" id="5HUU"/>
    </source>
</evidence>
<evidence type="ECO:0007744" key="8">
    <source>
        <dbReference type="PDB" id="5HUV"/>
    </source>
</evidence>
<evidence type="ECO:0007744" key="9">
    <source>
        <dbReference type="PDB" id="5HVL"/>
    </source>
</evidence>
<evidence type="ECO:0007829" key="10">
    <source>
        <dbReference type="PDB" id="5HUT"/>
    </source>
</evidence>
<evidence type="ECO:0007829" key="11">
    <source>
        <dbReference type="PDB" id="5HUV"/>
    </source>
</evidence>
<evidence type="ECO:0007829" key="12">
    <source>
        <dbReference type="PDB" id="5HVL"/>
    </source>
</evidence>
<gene>
    <name evidence="3" type="primary">TPS1</name>
    <name type="ordered locus">CAALFM_CR05720WA</name>
    <name type="ORF">CaO19.13961</name>
    <name type="ORF">CaO19.6640</name>
</gene>
<reference key="1">
    <citation type="journal article" date="1998" name="J. Bacteriol.">
        <title>Disruption of the Candida albicans TPS1 gene encoding trehalose-6-phosphate synthase impairs formation of hyphae and decreases infectivity.</title>
        <authorList>
            <person name="Zaragoza O."/>
            <person name="Blazquez M.A."/>
            <person name="Gancedo C."/>
        </authorList>
    </citation>
    <scope>NUCLEOTIDE SEQUENCE [GENOMIC DNA]</scope>
    <scope>FUNCTION</scope>
    <scope>CATALYTIC ACTIVITY</scope>
</reference>
<reference key="2">
    <citation type="journal article" date="2004" name="Proc. Natl. Acad. Sci. U.S.A.">
        <title>The diploid genome sequence of Candida albicans.</title>
        <authorList>
            <person name="Jones T."/>
            <person name="Federspiel N.A."/>
            <person name="Chibana H."/>
            <person name="Dungan J."/>
            <person name="Kalman S."/>
            <person name="Magee B.B."/>
            <person name="Newport G."/>
            <person name="Thorstenson Y.R."/>
            <person name="Agabian N."/>
            <person name="Magee P.T."/>
            <person name="Davis R.W."/>
            <person name="Scherer S."/>
        </authorList>
    </citation>
    <scope>NUCLEOTIDE SEQUENCE [LARGE SCALE GENOMIC DNA]</scope>
    <source>
        <strain>SC5314 / ATCC MYA-2876</strain>
    </source>
</reference>
<reference key="3">
    <citation type="journal article" date="2007" name="Genome Biol.">
        <title>Assembly of the Candida albicans genome into sixteen supercontigs aligned on the eight chromosomes.</title>
        <authorList>
            <person name="van het Hoog M."/>
            <person name="Rast T.J."/>
            <person name="Martchenko M."/>
            <person name="Grindle S."/>
            <person name="Dignard D."/>
            <person name="Hogues H."/>
            <person name="Cuomo C."/>
            <person name="Berriman M."/>
            <person name="Scherer S."/>
            <person name="Magee B.B."/>
            <person name="Whiteway M."/>
            <person name="Chibana H."/>
            <person name="Nantel A."/>
            <person name="Magee P.T."/>
        </authorList>
    </citation>
    <scope>GENOME REANNOTATION</scope>
    <source>
        <strain>SC5314 / ATCC MYA-2876</strain>
    </source>
</reference>
<reference key="4">
    <citation type="journal article" date="2013" name="Genome Biol.">
        <title>Assembly of a phased diploid Candida albicans genome facilitates allele-specific measurements and provides a simple model for repeat and indel structure.</title>
        <authorList>
            <person name="Muzzey D."/>
            <person name="Schwartz K."/>
            <person name="Weissman J.S."/>
            <person name="Sherlock G."/>
        </authorList>
    </citation>
    <scope>NUCLEOTIDE SEQUENCE [LARGE SCALE GENOMIC DNA]</scope>
    <scope>GENOME REANNOTATION</scope>
    <source>
        <strain>SC5314 / ATCC MYA-2876</strain>
    </source>
</reference>
<reference evidence="6 7 8 9" key="5">
    <citation type="journal article" date="2017" name="MBio">
        <title>Structural and In Vivo Studies on Trehalose-6-Phosphate Synthase from Pathogenic Fungi Provide Insights into Its Catalytic Mechanism, Biological Necessity, and Potential for Novel Antifungal Drug Design.</title>
        <authorList>
            <person name="Miao Y."/>
            <person name="Tenor J.L."/>
            <person name="Toffaletti D.L."/>
            <person name="Maskarinec S.A."/>
            <person name="Liu J."/>
            <person name="Lee R.E."/>
            <person name="Perfect J.R."/>
            <person name="Brennan R.G."/>
        </authorList>
    </citation>
    <scope>X-RAY CRYSTALLOGRAPHY (1.80 ANGSTROMS) IN COMPLEXES WITH UDP-ALPHA-D-GLUCOSE; D-GLUCOSE-6-PHOSPHATE AND UDP</scope>
    <scope>FUNCTION</scope>
    <scope>ACTIVITY REGULATION</scope>
    <scope>CATALYTIC ACTIVITY</scope>
    <scope>DISRUPTION PHENOTYPE</scope>
    <scope>MUTAGENESIS OF TYR-89; LYS-285; ASP-379 AND GLU-387</scope>
</reference>
<organism>
    <name type="scientific">Candida albicans (strain SC5314 / ATCC MYA-2876)</name>
    <name type="common">Yeast</name>
    <dbReference type="NCBI Taxonomy" id="237561"/>
    <lineage>
        <taxon>Eukaryota</taxon>
        <taxon>Fungi</taxon>
        <taxon>Dikarya</taxon>
        <taxon>Ascomycota</taxon>
        <taxon>Saccharomycotina</taxon>
        <taxon>Pichiomycetes</taxon>
        <taxon>Debaryomycetaceae</taxon>
        <taxon>Candida/Lodderomyces clade</taxon>
        <taxon>Candida</taxon>
    </lineage>
</organism>
<protein>
    <recommendedName>
        <fullName>Alpha,alpha-trehalose-phosphate synthase [UDP-forming]</fullName>
        <ecNumber evidence="1 5">2.4.1.15</ecNumber>
    </recommendedName>
    <alternativeName>
        <fullName>Trehalose-6-phosphate synthase</fullName>
    </alternativeName>
    <alternativeName>
        <fullName>UDP-glucose-glucosephosphate glucosyltransferase</fullName>
    </alternativeName>
</protein>
<name>TPS1_CANAL</name>
<keyword id="KW-0002">3D-structure</keyword>
<keyword id="KW-0328">Glycosyltransferase</keyword>
<keyword id="KW-1185">Reference proteome</keyword>
<keyword id="KW-0346">Stress response</keyword>
<keyword id="KW-0808">Transferase</keyword>
<sequence length="478" mass="54457">MVQGKVLVVSNRIPVTIKRLDNGSYDYSMSSGGLVTALQGLKKTTEFQWYGWPGLEIPEDEQTKVNDELKSKFNCTAIFLSDTIADLHYNGFSNSILWPLFHYHPGEMNFDENAWAAYIEANKKFALEIVKQVNDDDMIWVHDYHLMLLPEMLRQEIGNKKKNIKIGFFLHTPFPSSEIYRILPVRKEILEGVLSCDLIGFHTYDYARHFISSVSRIVPNVSTLPNGIKYQGRSISIGAFPIGIDVDNFIDGLKKDSVVERIKQLKSKFKDVKVIVGVDRLDYIKGVPQKLHAFEVFLNENPEWIGKVVLVQVAVPSRGDVEEYQSLRSTVSELVGRINGEFGTVEFVPIHYLHKSIPFDELISLYNISDVCLVSSTRDGMNLVSYEYIACQQDRKGVLILSEFAGAAQSLNGALIVNPWNTEDLSEAIKESLTLPEEKREFNFKKLFTYISKYTSGFWGESFVKELYKCNPQKSLRD</sequence>
<accession>Q92410</accession>
<accession>A0A1D8PT23</accession>
<accession>Q59PS4</accession>
<dbReference type="EC" id="2.4.1.15" evidence="1 5"/>
<dbReference type="EMBL" id="Y07918">
    <property type="protein sequence ID" value="CAA69223.1"/>
    <property type="molecule type" value="Genomic_DNA"/>
</dbReference>
<dbReference type="EMBL" id="CP017630">
    <property type="protein sequence ID" value="AOW31288.1"/>
    <property type="molecule type" value="Genomic_DNA"/>
</dbReference>
<dbReference type="RefSeq" id="XP_711706.1">
    <property type="nucleotide sequence ID" value="XM_706614.2"/>
</dbReference>
<dbReference type="PDB" id="5HUT">
    <property type="method" value="X-ray"/>
    <property type="resolution" value="1.90 A"/>
    <property type="chains" value="A/B=1-478"/>
</dbReference>
<dbReference type="PDB" id="5HUU">
    <property type="method" value="X-ray"/>
    <property type="resolution" value="2.37 A"/>
    <property type="chains" value="A/B=1-478"/>
</dbReference>
<dbReference type="PDB" id="5HUV">
    <property type="method" value="X-ray"/>
    <property type="resolution" value="2.00 A"/>
    <property type="chains" value="A/B=1-478"/>
</dbReference>
<dbReference type="PDB" id="5HVL">
    <property type="method" value="X-ray"/>
    <property type="resolution" value="1.80 A"/>
    <property type="chains" value="A/B=1-478"/>
</dbReference>
<dbReference type="PDBsum" id="5HUT"/>
<dbReference type="PDBsum" id="5HUU"/>
<dbReference type="PDBsum" id="5HUV"/>
<dbReference type="PDBsum" id="5HVL"/>
<dbReference type="SMR" id="Q92410"/>
<dbReference type="BioGRID" id="1229305">
    <property type="interactions" value="2"/>
</dbReference>
<dbReference type="FunCoup" id="Q92410">
    <property type="interactions" value="641"/>
</dbReference>
<dbReference type="STRING" id="237561.Q92410"/>
<dbReference type="CAZy" id="GT20">
    <property type="family name" value="Glycosyltransferase Family 20"/>
</dbReference>
<dbReference type="EnsemblFungi" id="CR_05720W_A-T">
    <property type="protein sequence ID" value="CR_05720W_A-T-p1"/>
    <property type="gene ID" value="CR_05720W_A"/>
</dbReference>
<dbReference type="GeneID" id="3646699"/>
<dbReference type="KEGG" id="cal:CAALFM_CR05720WA"/>
<dbReference type="CGD" id="CAL0000182821">
    <property type="gene designation" value="TPS1"/>
</dbReference>
<dbReference type="VEuPathDB" id="FungiDB:CR_05720W_A"/>
<dbReference type="eggNOG" id="KOG1050">
    <property type="taxonomic scope" value="Eukaryota"/>
</dbReference>
<dbReference type="HOGENOM" id="CLU_002351_7_2_1"/>
<dbReference type="InParanoid" id="Q92410"/>
<dbReference type="OMA" id="NRTIWPL"/>
<dbReference type="OrthoDB" id="755951at2759"/>
<dbReference type="BRENDA" id="2.4.1.15">
    <property type="organism ID" value="1096"/>
</dbReference>
<dbReference type="PHI-base" id="PHI:130"/>
<dbReference type="PRO" id="PR:Q92410"/>
<dbReference type="Proteomes" id="UP000000559">
    <property type="component" value="Chromosome R"/>
</dbReference>
<dbReference type="GO" id="GO:0005946">
    <property type="term" value="C:alpha,alpha-trehalose-phosphate synthase complex (UDP-forming)"/>
    <property type="evidence" value="ECO:0000318"/>
    <property type="project" value="GO_Central"/>
</dbReference>
<dbReference type="GO" id="GO:0003825">
    <property type="term" value="F:alpha,alpha-trehalose-phosphate synthase (UDP-forming) activity"/>
    <property type="evidence" value="ECO:0000314"/>
    <property type="project" value="CGD"/>
</dbReference>
<dbReference type="GO" id="GO:0004805">
    <property type="term" value="F:trehalose-phosphatase activity"/>
    <property type="evidence" value="ECO:0007669"/>
    <property type="project" value="EnsemblFungi"/>
</dbReference>
<dbReference type="GO" id="GO:0071465">
    <property type="term" value="P:cellular response to desiccation"/>
    <property type="evidence" value="ECO:0007669"/>
    <property type="project" value="EnsemblFungi"/>
</dbReference>
<dbReference type="GO" id="GO:0034605">
    <property type="term" value="P:cellular response to heat"/>
    <property type="evidence" value="ECO:0000315"/>
    <property type="project" value="CGD"/>
</dbReference>
<dbReference type="GO" id="GO:0033554">
    <property type="term" value="P:cellular response to stress"/>
    <property type="evidence" value="ECO:0000315"/>
    <property type="project" value="CGD"/>
</dbReference>
<dbReference type="GO" id="GO:0030447">
    <property type="term" value="P:filamentous growth"/>
    <property type="evidence" value="ECO:0000315"/>
    <property type="project" value="CGD"/>
</dbReference>
<dbReference type="GO" id="GO:0036180">
    <property type="term" value="P:filamentous growth of a population of unicellular organisms in response to biotic stimulus"/>
    <property type="evidence" value="ECO:0000315"/>
    <property type="project" value="CGD"/>
</dbReference>
<dbReference type="GO" id="GO:0036168">
    <property type="term" value="P:filamentous growth of a population of unicellular organisms in response to heat"/>
    <property type="evidence" value="ECO:0000315"/>
    <property type="project" value="CGD"/>
</dbReference>
<dbReference type="GO" id="GO:0005992">
    <property type="term" value="P:trehalose biosynthetic process"/>
    <property type="evidence" value="ECO:0000315"/>
    <property type="project" value="CGD"/>
</dbReference>
<dbReference type="CDD" id="cd03788">
    <property type="entry name" value="GT20_TPS"/>
    <property type="match status" value="1"/>
</dbReference>
<dbReference type="FunFam" id="3.40.50.2000:FF:000007">
    <property type="entry name" value="Trehalose-6-phosphate synthase"/>
    <property type="match status" value="1"/>
</dbReference>
<dbReference type="FunFam" id="3.40.50.2000:FF:000035">
    <property type="entry name" value="Trehalose-6-phosphate synthase"/>
    <property type="match status" value="1"/>
</dbReference>
<dbReference type="Gene3D" id="3.40.50.2000">
    <property type="entry name" value="Glycogen Phosphorylase B"/>
    <property type="match status" value="2"/>
</dbReference>
<dbReference type="InterPro" id="IPR001830">
    <property type="entry name" value="Glyco_trans_20"/>
</dbReference>
<dbReference type="InterPro" id="IPR012766">
    <property type="entry name" value="Trehalose_OtsA"/>
</dbReference>
<dbReference type="NCBIfam" id="TIGR02400">
    <property type="entry name" value="trehalose_OtsA"/>
    <property type="match status" value="1"/>
</dbReference>
<dbReference type="PANTHER" id="PTHR10788:SF106">
    <property type="entry name" value="BCDNA.GH08860"/>
    <property type="match status" value="1"/>
</dbReference>
<dbReference type="PANTHER" id="PTHR10788">
    <property type="entry name" value="TREHALOSE-6-PHOSPHATE SYNTHASE"/>
    <property type="match status" value="1"/>
</dbReference>
<dbReference type="Pfam" id="PF00982">
    <property type="entry name" value="Glyco_transf_20"/>
    <property type="match status" value="1"/>
</dbReference>
<dbReference type="SUPFAM" id="SSF53756">
    <property type="entry name" value="UDP-Glycosyltransferase/glycogen phosphorylase"/>
    <property type="match status" value="1"/>
</dbReference>